<accession>Q2YWX8</accession>
<reference key="1">
    <citation type="journal article" date="2007" name="PLoS ONE">
        <title>Molecular correlates of host specialization in Staphylococcus aureus.</title>
        <authorList>
            <person name="Herron-Olson L."/>
            <person name="Fitzgerald J.R."/>
            <person name="Musser J.M."/>
            <person name="Kapur V."/>
        </authorList>
    </citation>
    <scope>NUCLEOTIDE SEQUENCE [LARGE SCALE GENOMIC DNA]</scope>
    <source>
        <strain>bovine RF122 / ET3-1</strain>
    </source>
</reference>
<sequence>MRLYINEIKIKDDTLYCYTEDTIKGLSEVGQMLVDSDNYAFAYTLDDGKAYAYLIFVQETWTMLHENMTKKIIINDELELTEFHQELTYILDNIKGNNNYGKEFVATVEETFDIE</sequence>
<feature type="chain" id="PRO_0000369657" description="UPF0738 protein SAB0871">
    <location>
        <begin position="1"/>
        <end position="115"/>
    </location>
</feature>
<name>Y871_STAAB</name>
<protein>
    <recommendedName>
        <fullName evidence="1">UPF0738 protein SAB0871</fullName>
    </recommendedName>
</protein>
<proteinExistence type="inferred from homology"/>
<dbReference type="EMBL" id="AJ938182">
    <property type="protein sequence ID" value="CAI80559.1"/>
    <property type="molecule type" value="Genomic_DNA"/>
</dbReference>
<dbReference type="RefSeq" id="WP_001242108.1">
    <property type="nucleotide sequence ID" value="NC_007622.1"/>
</dbReference>
<dbReference type="KEGG" id="sab:SAB0871"/>
<dbReference type="HOGENOM" id="CLU_142282_0_0_9"/>
<dbReference type="HAMAP" id="MF_01861">
    <property type="entry name" value="UPF0738"/>
    <property type="match status" value="1"/>
</dbReference>
<dbReference type="InterPro" id="IPR020908">
    <property type="entry name" value="UPF0738"/>
</dbReference>
<dbReference type="Pfam" id="PF19785">
    <property type="entry name" value="UPF0738"/>
    <property type="match status" value="1"/>
</dbReference>
<comment type="similarity">
    <text evidence="1">Belongs to the UPF0738 family.</text>
</comment>
<evidence type="ECO:0000255" key="1">
    <source>
        <dbReference type="HAMAP-Rule" id="MF_01861"/>
    </source>
</evidence>
<organism>
    <name type="scientific">Staphylococcus aureus (strain bovine RF122 / ET3-1)</name>
    <dbReference type="NCBI Taxonomy" id="273036"/>
    <lineage>
        <taxon>Bacteria</taxon>
        <taxon>Bacillati</taxon>
        <taxon>Bacillota</taxon>
        <taxon>Bacilli</taxon>
        <taxon>Bacillales</taxon>
        <taxon>Staphylococcaceae</taxon>
        <taxon>Staphylococcus</taxon>
    </lineage>
</organism>
<gene>
    <name type="ordered locus">SAB0871</name>
</gene>